<feature type="chain" id="PRO_0000266647" description="Small ribosomal subunit protein bS21A">
    <location>
        <begin position="1"/>
        <end position="70"/>
    </location>
</feature>
<proteinExistence type="inferred from homology"/>
<dbReference type="EMBL" id="CP000270">
    <property type="protein sequence ID" value="ABE32826.1"/>
    <property type="molecule type" value="Genomic_DNA"/>
</dbReference>
<dbReference type="SMR" id="Q13SW3"/>
<dbReference type="STRING" id="266265.Bxe_A0105"/>
<dbReference type="KEGG" id="bxb:DR64_2280"/>
<dbReference type="KEGG" id="bxe:Bxe_A0105"/>
<dbReference type="eggNOG" id="COG0828">
    <property type="taxonomic scope" value="Bacteria"/>
</dbReference>
<dbReference type="OrthoDB" id="9799244at2"/>
<dbReference type="Proteomes" id="UP000001817">
    <property type="component" value="Chromosome 1"/>
</dbReference>
<dbReference type="GO" id="GO:1990904">
    <property type="term" value="C:ribonucleoprotein complex"/>
    <property type="evidence" value="ECO:0007669"/>
    <property type="project" value="UniProtKB-KW"/>
</dbReference>
<dbReference type="GO" id="GO:0005840">
    <property type="term" value="C:ribosome"/>
    <property type="evidence" value="ECO:0007669"/>
    <property type="project" value="UniProtKB-KW"/>
</dbReference>
<dbReference type="GO" id="GO:0003735">
    <property type="term" value="F:structural constituent of ribosome"/>
    <property type="evidence" value="ECO:0007669"/>
    <property type="project" value="InterPro"/>
</dbReference>
<dbReference type="GO" id="GO:0006412">
    <property type="term" value="P:translation"/>
    <property type="evidence" value="ECO:0007669"/>
    <property type="project" value="UniProtKB-UniRule"/>
</dbReference>
<dbReference type="Gene3D" id="1.20.5.1150">
    <property type="entry name" value="Ribosomal protein S8"/>
    <property type="match status" value="1"/>
</dbReference>
<dbReference type="HAMAP" id="MF_00358">
    <property type="entry name" value="Ribosomal_bS21"/>
    <property type="match status" value="1"/>
</dbReference>
<dbReference type="InterPro" id="IPR001911">
    <property type="entry name" value="Ribosomal_bS21"/>
</dbReference>
<dbReference type="InterPro" id="IPR038380">
    <property type="entry name" value="Ribosomal_bS21_sf"/>
</dbReference>
<dbReference type="NCBIfam" id="TIGR00030">
    <property type="entry name" value="S21p"/>
    <property type="match status" value="1"/>
</dbReference>
<dbReference type="PANTHER" id="PTHR21109">
    <property type="entry name" value="MITOCHONDRIAL 28S RIBOSOMAL PROTEIN S21"/>
    <property type="match status" value="1"/>
</dbReference>
<dbReference type="PANTHER" id="PTHR21109:SF22">
    <property type="entry name" value="SMALL RIBOSOMAL SUBUNIT PROTEIN BS21"/>
    <property type="match status" value="1"/>
</dbReference>
<dbReference type="Pfam" id="PF01165">
    <property type="entry name" value="Ribosomal_S21"/>
    <property type="match status" value="1"/>
</dbReference>
<dbReference type="PRINTS" id="PR00976">
    <property type="entry name" value="RIBOSOMALS21"/>
</dbReference>
<sequence length="70" mass="8381">MTTILLKENEPFEVAIRRFRRAIEKNGLIAELRERQSYEKPTTARKRKKAAAVKRLHKRLRSQMLPKKLH</sequence>
<reference key="1">
    <citation type="journal article" date="2006" name="Proc. Natl. Acad. Sci. U.S.A.">
        <title>Burkholderia xenovorans LB400 harbors a multi-replicon, 9.73-Mbp genome shaped for versatility.</title>
        <authorList>
            <person name="Chain P.S.G."/>
            <person name="Denef V.J."/>
            <person name="Konstantinidis K.T."/>
            <person name="Vergez L.M."/>
            <person name="Agullo L."/>
            <person name="Reyes V.L."/>
            <person name="Hauser L."/>
            <person name="Cordova M."/>
            <person name="Gomez L."/>
            <person name="Gonzalez M."/>
            <person name="Land M."/>
            <person name="Lao V."/>
            <person name="Larimer F."/>
            <person name="LiPuma J.J."/>
            <person name="Mahenthiralingam E."/>
            <person name="Malfatti S.A."/>
            <person name="Marx C.J."/>
            <person name="Parnell J.J."/>
            <person name="Ramette A."/>
            <person name="Richardson P."/>
            <person name="Seeger M."/>
            <person name="Smith D."/>
            <person name="Spilker T."/>
            <person name="Sul W.J."/>
            <person name="Tsoi T.V."/>
            <person name="Ulrich L.E."/>
            <person name="Zhulin I.B."/>
            <person name="Tiedje J.M."/>
        </authorList>
    </citation>
    <scope>NUCLEOTIDE SEQUENCE [LARGE SCALE GENOMIC DNA]</scope>
    <source>
        <strain>LB400</strain>
    </source>
</reference>
<comment type="similarity">
    <text evidence="1">Belongs to the bacterial ribosomal protein bS21 family.</text>
</comment>
<protein>
    <recommendedName>
        <fullName evidence="1">Small ribosomal subunit protein bS21A</fullName>
    </recommendedName>
    <alternativeName>
        <fullName evidence="2">30S ribosomal protein S21 1</fullName>
    </alternativeName>
</protein>
<evidence type="ECO:0000255" key="1">
    <source>
        <dbReference type="HAMAP-Rule" id="MF_00358"/>
    </source>
</evidence>
<evidence type="ECO:0000305" key="2"/>
<gene>
    <name evidence="1" type="primary">rpsU1</name>
    <name type="ordered locus">Bxeno_A4288</name>
    <name type="ORF">Bxe_A0105</name>
</gene>
<keyword id="KW-1185">Reference proteome</keyword>
<keyword id="KW-0687">Ribonucleoprotein</keyword>
<keyword id="KW-0689">Ribosomal protein</keyword>
<accession>Q13SW3</accession>
<name>RS211_PARXL</name>
<organism>
    <name type="scientific">Paraburkholderia xenovorans (strain LB400)</name>
    <dbReference type="NCBI Taxonomy" id="266265"/>
    <lineage>
        <taxon>Bacteria</taxon>
        <taxon>Pseudomonadati</taxon>
        <taxon>Pseudomonadota</taxon>
        <taxon>Betaproteobacteria</taxon>
        <taxon>Burkholderiales</taxon>
        <taxon>Burkholderiaceae</taxon>
        <taxon>Paraburkholderia</taxon>
    </lineage>
</organism>